<accession>P0DV50</accession>
<dbReference type="SMR" id="P0DV50"/>
<dbReference type="GO" id="GO:0005737">
    <property type="term" value="C:cytoplasm"/>
    <property type="evidence" value="ECO:0007669"/>
    <property type="project" value="UniProtKB-SubCell"/>
</dbReference>
<dbReference type="GO" id="GO:0005886">
    <property type="term" value="C:plasma membrane"/>
    <property type="evidence" value="ECO:0007669"/>
    <property type="project" value="UniProtKB-SubCell"/>
</dbReference>
<dbReference type="GO" id="GO:0051607">
    <property type="term" value="P:defense response to virus"/>
    <property type="evidence" value="ECO:0007669"/>
    <property type="project" value="UniProtKB-KW"/>
</dbReference>
<name>GSDM_DESBX</name>
<comment type="function">
    <molecule>Gasdermin bGSDM</molecule>
    <text evidence="1 4 5">Precursor of a pore-forming protein involved in defense against bacteriophages (By similarity). Expression of bGSDM and the neighboring protease gene (Ga0182885_104520) is toxic in E.coli (PubMed:35025633). Cleavage of this precursor by its dedicated protease releases the active moiety (gasdermin bGSDM, N-terminus) which inserts into membranes, forming pores and triggering cell death (By similarity).</text>
</comment>
<comment type="function">
    <molecule>Gasdermin bGSDM, N-terminus</molecule>
    <text evidence="4">Pore-forming protein that causes membrane permeabilization via a pyroptosis-like activity. Makes ring-like pores when released.</text>
</comment>
<comment type="activity regulation">
    <molecule>Gasdermin bGSDM</molecule>
    <text evidence="4">The full-length protein before cleavage is inactive: intramolecular interactions between the N-terminal domain and the C-terminal region as well as the lipid modification, mediate autoinhibition. The pyroptosis-like-inducing activity is carried by the released N-terminal domain (Gasdermin bGSDM, N-terminus).</text>
</comment>
<comment type="subunit">
    <molecule>Gasdermin bGSDM</molecule>
    <text evidence="4">Monomer.</text>
</comment>
<comment type="subunit">
    <molecule>Gasdermin bGSDM, N-terminus</molecule>
    <text evidence="2">Forms large, homooligomeric ring-shaped pores when inserted in membranes.</text>
</comment>
<comment type="subcellular location">
    <molecule>Gasdermin bGSDM</molecule>
    <subcellularLocation>
        <location evidence="4">Cytoplasm</location>
    </subcellularLocation>
</comment>
<comment type="subcellular location">
    <molecule>Gasdermin bGSDM, N-terminus</molecule>
    <subcellularLocation>
        <location evidence="4">Cell inner membrane</location>
        <topology evidence="7">Multi-pass membrane protein</topology>
    </subcellularLocation>
</comment>
<comment type="domain">
    <text evidence="4">The N-terminus has marked structural similarity to the mammalian gasdermin N-terminal domain. The C-terminal region wraps around the twisted beta sheet core, probably stabilizing the inactive state.</text>
</comment>
<comment type="domain">
    <text evidence="2">The beta-stranded transmembrane 'fingers' of the active protein form by local refolding of several alpha helices found only in the inactive state. Reorientation of the N-terminus probably flips the palmitoyl moiety for insertion into the membrane.</text>
</comment>
<comment type="PTM">
    <text evidence="2 3">Palmitoylation helps stabilize the inactive state; may self palmitoylate. Palmitoylation plays a significant role in pore formation.</text>
</comment>
<comment type="similarity">
    <text evidence="5">Belongs to the bacterial gasdermin family.</text>
</comment>
<keyword id="KW-0051">Antiviral defense</keyword>
<keyword id="KW-0997">Cell inner membrane</keyword>
<keyword id="KW-1003">Cell membrane</keyword>
<keyword id="KW-0963">Cytoplasm</keyword>
<keyword id="KW-0449">Lipoprotein</keyword>
<keyword id="KW-0472">Membrane</keyword>
<keyword id="KW-0564">Palmitate</keyword>
<keyword id="KW-0812">Transmembrane</keyword>
<keyword id="KW-1134">Transmembrane beta strand</keyword>
<feature type="chain" id="PRO_0000455566" description="Gasdermin bGSDM">
    <location>
        <begin position="1"/>
        <end position="266"/>
    </location>
</feature>
<feature type="chain" id="PRO_0000455567" description="Gasdermin bGSDM, N-terminus" evidence="8">
    <location>
        <begin position="1"/>
        <end status="unknown"/>
    </location>
</feature>
<feature type="transmembrane region" description="Beta stranded" evidence="2">
    <location>
        <begin position="69"/>
        <end position="85"/>
    </location>
</feature>
<feature type="transmembrane region" description="Beta stranded" evidence="2">
    <location>
        <begin position="97"/>
        <end position="115"/>
    </location>
</feature>
<feature type="transmembrane region" description="Beta stranded" evidence="2">
    <location>
        <begin position="163"/>
        <end position="180"/>
    </location>
</feature>
<feature type="transmembrane region" description="Beta stranded" evidence="2">
    <location>
        <begin position="189"/>
        <end position="205"/>
    </location>
</feature>
<feature type="region of interest" description="C-terminal region" evidence="7">
    <location>
        <begin status="unknown"/>
        <end position="266"/>
    </location>
</feature>
<feature type="lipid moiety-binding region" description="S-palmitoyl cysteine" evidence="3">
    <location>
        <position position="3"/>
    </location>
</feature>
<feature type="mutagenesis site" description="Not cleaved by Runella protease." evidence="5">
    <original>MKALGKAP</original>
    <variation>NRVLGENM</variation>
    <location>
        <begin position="240"/>
        <end position="247"/>
    </location>
</feature>
<proteinExistence type="evidence at protein level"/>
<organism>
    <name type="scientific">Desulfuromonadales bacterium</name>
    <dbReference type="NCBI Taxonomy" id="2099678"/>
    <lineage>
        <taxon>Bacteria</taxon>
        <taxon>Pseudomonadati</taxon>
        <taxon>Thermodesulfobacteriota</taxon>
        <taxon>Desulfuromonadia</taxon>
        <taxon>Desulfuromonadales</taxon>
    </lineage>
</organism>
<evidence type="ECO:0000250" key="1">
    <source>
        <dbReference type="UniProtKB" id="A0A0S2DNG5"/>
    </source>
</evidence>
<evidence type="ECO:0000250" key="2">
    <source>
        <dbReference type="UniProtKB" id="A0A2T4VDM4"/>
    </source>
</evidence>
<evidence type="ECO:0000250" key="3">
    <source>
        <dbReference type="UniProtKB" id="P0DV46"/>
    </source>
</evidence>
<evidence type="ECO:0000250" key="4">
    <source>
        <dbReference type="UniProtKB" id="P0DV48"/>
    </source>
</evidence>
<evidence type="ECO:0000269" key="5">
    <source>
    </source>
</evidence>
<evidence type="ECO:0000303" key="6">
    <source>
    </source>
</evidence>
<evidence type="ECO:0000305" key="7"/>
<evidence type="ECO:0000305" key="8">
    <source>
    </source>
</evidence>
<sequence>MWCKDPFLTYLKEFGYNVIRLPKADVKPLQVLARCGKDLNRLGEINNLLVAGDSIPLPRLKENTRAASISGQRTGDLSVGVGLSILGTVLGAMGGSKLGLDTKYQNAKTTMFEFQDVFEDTVEIIELDKFLGDADINPFSRHVAELLEADDLYITTSTIKSTKFTIEAKKSDGTALELTIPDIQGIVGGNVKVSGAASVTSKICYESPIPLVFGFQAVRLFYDNGRYTAIEPLDSGSAGMKALGKAPSDGAARLMTDGPFLRLTGV</sequence>
<protein>
    <recommendedName>
        <fullName evidence="7">Gasdermin bGSDM</fullName>
        <shortName evidence="6">bGSDM</shortName>
    </recommendedName>
    <alternativeName>
        <fullName evidence="6">Bacterial gasdermin</fullName>
    </alternativeName>
    <component>
        <recommendedName>
            <fullName evidence="7">Gasdermin bGSDM, N-terminus</fullName>
        </recommendedName>
    </component>
</protein>
<reference key="1">
    <citation type="journal article" date="2018" name="Microorganisms">
        <title>Stable Isotope and Metagenomic Profiling of a Methanogenic Naphthalene-Degrading Enrichment Culture.</title>
        <authorList>
            <person name="Toth C.R.A."/>
            <person name="Berdugo-Clavijo C."/>
            <person name="O'Farrell C.M."/>
            <person name="Jones G.M."/>
            <person name="Sheremet A."/>
            <person name="Dunfield P.F."/>
            <person name="Gieg L.M."/>
        </authorList>
    </citation>
    <scope>NUCLEOTIDE SEQUENCE [LARGE SCALE GENOMIC DNA]</scope>
    <source>
        <strain>Bin 1</strain>
    </source>
</reference>
<reference key="2">
    <citation type="journal article" date="2022" name="Science">
        <title>Bacterial gasdermins reveal an ancient mechanism of cell death.</title>
        <authorList>
            <person name="Johnson A.G."/>
            <person name="Wein T."/>
            <person name="Mayer M.L."/>
            <person name="Duncan-Lowey B."/>
            <person name="Yirmiya E."/>
            <person name="Oppenheimer-Shaanan Y."/>
            <person name="Amitai G."/>
            <person name="Sorek R."/>
            <person name="Kranzusch P.J."/>
        </authorList>
    </citation>
    <scope>IDENTIFICATION</scope>
    <scope>FUNCTION</scope>
    <scope>MUTAGENESIS OF 240-MET--PRO-247</scope>
    <source>
        <strain>Bin 1</strain>
    </source>
</reference>
<gene>
    <name evidence="6" type="ORF">Ga0182885_104519</name>
</gene>